<proteinExistence type="inferred from homology"/>
<keyword id="KW-0067">ATP-binding</keyword>
<keyword id="KW-0143">Chaperone</keyword>
<keyword id="KW-0963">Cytoplasm</keyword>
<keyword id="KW-0413">Isomerase</keyword>
<keyword id="KW-0547">Nucleotide-binding</keyword>
<name>CH60_LACLS</name>
<sequence>MSKEIKFSSDARTAMMRGIDILADTVKTTLGPKGRNVVLEKSYGSPLITNDGVTIAKEIELEDHFENMGAKLVSEVASKTNDIAGDGTTTATVLTQAIVREGLKNVTAGANPVGIRRGIELAAETAVASIKEMAIPVHDKSAIAQVATVSSRSEKVGEYISDAMERVGSDGVITIEESKGMQTELDVVEGMQFDRGYLSQYMVSNTEKMVAELDNPYILITDKKISNIQEILPLLEQILKTNRPLLIVADDVDGEALPTLVLNKIKGVFNVVAVKAPGFGDRRKAQLEDLAILTGGTVITEELGLDLKDATLEALGQAAKATVDKDHTTIVEGAGSVDAISDRVAIIKAQIEKTTSDFDREKLQERLAKLAGGVAVVKVGAATETELKAMKLLIEDALNATRAAVEEGIVSGGGTALVNAIAALDKLSEEGDIQTGINIVRRALEEPVRQIAANAGYEGSVIIDKLRSEKVGTGFNAATGQWVNMIEEGIVDPAKVTRSALQNAASVAGLILTTEAVVANKPEPAAPAMPPMDPSMGMGGMM</sequence>
<dbReference type="EC" id="5.6.1.7" evidence="1"/>
<dbReference type="EMBL" id="CP000425">
    <property type="protein sequence ID" value="ABJ72044.1"/>
    <property type="molecule type" value="Genomic_DNA"/>
</dbReference>
<dbReference type="RefSeq" id="WP_011675465.1">
    <property type="nucleotide sequence ID" value="NC_008527.1"/>
</dbReference>
<dbReference type="SMR" id="Q031S8"/>
<dbReference type="GeneID" id="61108713"/>
<dbReference type="KEGG" id="llc:LACR_0440"/>
<dbReference type="HOGENOM" id="CLU_016503_3_0_9"/>
<dbReference type="Proteomes" id="UP000000240">
    <property type="component" value="Chromosome"/>
</dbReference>
<dbReference type="GO" id="GO:0005737">
    <property type="term" value="C:cytoplasm"/>
    <property type="evidence" value="ECO:0007669"/>
    <property type="project" value="UniProtKB-SubCell"/>
</dbReference>
<dbReference type="GO" id="GO:0005524">
    <property type="term" value="F:ATP binding"/>
    <property type="evidence" value="ECO:0007669"/>
    <property type="project" value="UniProtKB-UniRule"/>
</dbReference>
<dbReference type="GO" id="GO:0140662">
    <property type="term" value="F:ATP-dependent protein folding chaperone"/>
    <property type="evidence" value="ECO:0007669"/>
    <property type="project" value="InterPro"/>
</dbReference>
<dbReference type="GO" id="GO:0016853">
    <property type="term" value="F:isomerase activity"/>
    <property type="evidence" value="ECO:0007669"/>
    <property type="project" value="UniProtKB-KW"/>
</dbReference>
<dbReference type="GO" id="GO:0051082">
    <property type="term" value="F:unfolded protein binding"/>
    <property type="evidence" value="ECO:0007669"/>
    <property type="project" value="UniProtKB-UniRule"/>
</dbReference>
<dbReference type="GO" id="GO:0042026">
    <property type="term" value="P:protein refolding"/>
    <property type="evidence" value="ECO:0007669"/>
    <property type="project" value="UniProtKB-UniRule"/>
</dbReference>
<dbReference type="CDD" id="cd03344">
    <property type="entry name" value="GroEL"/>
    <property type="match status" value="1"/>
</dbReference>
<dbReference type="FunFam" id="3.50.7.10:FF:000001">
    <property type="entry name" value="60 kDa chaperonin"/>
    <property type="match status" value="1"/>
</dbReference>
<dbReference type="Gene3D" id="3.50.7.10">
    <property type="entry name" value="GroEL"/>
    <property type="match status" value="1"/>
</dbReference>
<dbReference type="Gene3D" id="1.10.560.10">
    <property type="entry name" value="GroEL-like equatorial domain"/>
    <property type="match status" value="1"/>
</dbReference>
<dbReference type="Gene3D" id="3.30.260.10">
    <property type="entry name" value="TCP-1-like chaperonin intermediate domain"/>
    <property type="match status" value="1"/>
</dbReference>
<dbReference type="HAMAP" id="MF_00600">
    <property type="entry name" value="CH60"/>
    <property type="match status" value="1"/>
</dbReference>
<dbReference type="InterPro" id="IPR018370">
    <property type="entry name" value="Chaperonin_Cpn60_CS"/>
</dbReference>
<dbReference type="InterPro" id="IPR001844">
    <property type="entry name" value="Cpn60/GroEL"/>
</dbReference>
<dbReference type="InterPro" id="IPR002423">
    <property type="entry name" value="Cpn60/GroEL/TCP-1"/>
</dbReference>
<dbReference type="InterPro" id="IPR027409">
    <property type="entry name" value="GroEL-like_apical_dom_sf"/>
</dbReference>
<dbReference type="InterPro" id="IPR027413">
    <property type="entry name" value="GROEL-like_equatorial_sf"/>
</dbReference>
<dbReference type="InterPro" id="IPR027410">
    <property type="entry name" value="TCP-1-like_intermed_sf"/>
</dbReference>
<dbReference type="NCBIfam" id="TIGR02348">
    <property type="entry name" value="GroEL"/>
    <property type="match status" value="1"/>
</dbReference>
<dbReference type="NCBIfam" id="NF000592">
    <property type="entry name" value="PRK00013.1"/>
    <property type="match status" value="1"/>
</dbReference>
<dbReference type="NCBIfam" id="NF009487">
    <property type="entry name" value="PRK12849.1"/>
    <property type="match status" value="1"/>
</dbReference>
<dbReference type="NCBIfam" id="NF009488">
    <property type="entry name" value="PRK12850.1"/>
    <property type="match status" value="1"/>
</dbReference>
<dbReference type="NCBIfam" id="NF009489">
    <property type="entry name" value="PRK12851.1"/>
    <property type="match status" value="1"/>
</dbReference>
<dbReference type="PANTHER" id="PTHR45633">
    <property type="entry name" value="60 KDA HEAT SHOCK PROTEIN, MITOCHONDRIAL"/>
    <property type="match status" value="1"/>
</dbReference>
<dbReference type="Pfam" id="PF00118">
    <property type="entry name" value="Cpn60_TCP1"/>
    <property type="match status" value="1"/>
</dbReference>
<dbReference type="PRINTS" id="PR00298">
    <property type="entry name" value="CHAPERONIN60"/>
</dbReference>
<dbReference type="SUPFAM" id="SSF52029">
    <property type="entry name" value="GroEL apical domain-like"/>
    <property type="match status" value="1"/>
</dbReference>
<dbReference type="SUPFAM" id="SSF48592">
    <property type="entry name" value="GroEL equatorial domain-like"/>
    <property type="match status" value="1"/>
</dbReference>
<dbReference type="SUPFAM" id="SSF54849">
    <property type="entry name" value="GroEL-intermediate domain like"/>
    <property type="match status" value="1"/>
</dbReference>
<dbReference type="PROSITE" id="PS00296">
    <property type="entry name" value="CHAPERONINS_CPN60"/>
    <property type="match status" value="1"/>
</dbReference>
<protein>
    <recommendedName>
        <fullName evidence="1">Chaperonin GroEL</fullName>
        <ecNumber evidence="1">5.6.1.7</ecNumber>
    </recommendedName>
    <alternativeName>
        <fullName evidence="1">60 kDa chaperonin</fullName>
    </alternativeName>
    <alternativeName>
        <fullName evidence="1">Chaperonin-60</fullName>
        <shortName evidence="1">Cpn60</shortName>
    </alternativeName>
</protein>
<organism>
    <name type="scientific">Lactococcus lactis subsp. cremoris (strain SK11)</name>
    <dbReference type="NCBI Taxonomy" id="272622"/>
    <lineage>
        <taxon>Bacteria</taxon>
        <taxon>Bacillati</taxon>
        <taxon>Bacillota</taxon>
        <taxon>Bacilli</taxon>
        <taxon>Lactobacillales</taxon>
        <taxon>Streptococcaceae</taxon>
        <taxon>Lactococcus</taxon>
        <taxon>Lactococcus cremoris subsp. cremoris</taxon>
    </lineage>
</organism>
<gene>
    <name evidence="1" type="primary">groEL</name>
    <name evidence="1" type="synonym">groL</name>
    <name type="ordered locus">LACR_0440</name>
</gene>
<evidence type="ECO:0000255" key="1">
    <source>
        <dbReference type="HAMAP-Rule" id="MF_00600"/>
    </source>
</evidence>
<comment type="function">
    <text evidence="1">Together with its co-chaperonin GroES, plays an essential role in assisting protein folding. The GroEL-GroES system forms a nano-cage that allows encapsulation of the non-native substrate proteins and provides a physical environment optimized to promote and accelerate protein folding.</text>
</comment>
<comment type="catalytic activity">
    <reaction evidence="1">
        <text>ATP + H2O + a folded polypeptide = ADP + phosphate + an unfolded polypeptide.</text>
        <dbReference type="EC" id="5.6.1.7"/>
    </reaction>
</comment>
<comment type="subunit">
    <text evidence="1">Forms a cylinder of 14 subunits composed of two heptameric rings stacked back-to-back. Interacts with the co-chaperonin GroES.</text>
</comment>
<comment type="subcellular location">
    <subcellularLocation>
        <location evidence="1">Cytoplasm</location>
    </subcellularLocation>
</comment>
<comment type="similarity">
    <text evidence="1">Belongs to the chaperonin (HSP60) family.</text>
</comment>
<feature type="chain" id="PRO_1000025801" description="Chaperonin GroEL">
    <location>
        <begin position="1"/>
        <end position="542"/>
    </location>
</feature>
<feature type="binding site" evidence="1">
    <location>
        <begin position="29"/>
        <end position="32"/>
    </location>
    <ligand>
        <name>ATP</name>
        <dbReference type="ChEBI" id="CHEBI:30616"/>
    </ligand>
</feature>
<feature type="binding site" evidence="1">
    <location>
        <begin position="86"/>
        <end position="90"/>
    </location>
    <ligand>
        <name>ATP</name>
        <dbReference type="ChEBI" id="CHEBI:30616"/>
    </ligand>
</feature>
<feature type="binding site" evidence="1">
    <location>
        <position position="413"/>
    </location>
    <ligand>
        <name>ATP</name>
        <dbReference type="ChEBI" id="CHEBI:30616"/>
    </ligand>
</feature>
<feature type="binding site" evidence="1">
    <location>
        <begin position="476"/>
        <end position="478"/>
    </location>
    <ligand>
        <name>ATP</name>
        <dbReference type="ChEBI" id="CHEBI:30616"/>
    </ligand>
</feature>
<feature type="binding site" evidence="1">
    <location>
        <position position="492"/>
    </location>
    <ligand>
        <name>ATP</name>
        <dbReference type="ChEBI" id="CHEBI:30616"/>
    </ligand>
</feature>
<accession>Q031S8</accession>
<reference key="1">
    <citation type="journal article" date="2006" name="Proc. Natl. Acad. Sci. U.S.A.">
        <title>Comparative genomics of the lactic acid bacteria.</title>
        <authorList>
            <person name="Makarova K.S."/>
            <person name="Slesarev A."/>
            <person name="Wolf Y.I."/>
            <person name="Sorokin A."/>
            <person name="Mirkin B."/>
            <person name="Koonin E.V."/>
            <person name="Pavlov A."/>
            <person name="Pavlova N."/>
            <person name="Karamychev V."/>
            <person name="Polouchine N."/>
            <person name="Shakhova V."/>
            <person name="Grigoriev I."/>
            <person name="Lou Y."/>
            <person name="Rohksar D."/>
            <person name="Lucas S."/>
            <person name="Huang K."/>
            <person name="Goodstein D.M."/>
            <person name="Hawkins T."/>
            <person name="Plengvidhya V."/>
            <person name="Welker D."/>
            <person name="Hughes J."/>
            <person name="Goh Y."/>
            <person name="Benson A."/>
            <person name="Baldwin K."/>
            <person name="Lee J.-H."/>
            <person name="Diaz-Muniz I."/>
            <person name="Dosti B."/>
            <person name="Smeianov V."/>
            <person name="Wechter W."/>
            <person name="Barabote R."/>
            <person name="Lorca G."/>
            <person name="Altermann E."/>
            <person name="Barrangou R."/>
            <person name="Ganesan B."/>
            <person name="Xie Y."/>
            <person name="Rawsthorne H."/>
            <person name="Tamir D."/>
            <person name="Parker C."/>
            <person name="Breidt F."/>
            <person name="Broadbent J.R."/>
            <person name="Hutkins R."/>
            <person name="O'Sullivan D."/>
            <person name="Steele J."/>
            <person name="Unlu G."/>
            <person name="Saier M.H. Jr."/>
            <person name="Klaenhammer T."/>
            <person name="Richardson P."/>
            <person name="Kozyavkin S."/>
            <person name="Weimer B.C."/>
            <person name="Mills D.A."/>
        </authorList>
    </citation>
    <scope>NUCLEOTIDE SEQUENCE [LARGE SCALE GENOMIC DNA]</scope>
    <source>
        <strain>SK11</strain>
    </source>
</reference>